<proteinExistence type="inferred from homology"/>
<keyword id="KW-0520">NAD</keyword>
<keyword id="KW-0560">Oxidoreductase</keyword>
<reference key="1">
    <citation type="journal article" date="2007" name="Proc. Natl. Acad. Sci. U.S.A.">
        <title>Genome and proteome of long-chain alkane degrading Geobacillus thermodenitrificans NG80-2 isolated from a deep-subsurface oil reservoir.</title>
        <authorList>
            <person name="Feng L."/>
            <person name="Wang W."/>
            <person name="Cheng J."/>
            <person name="Ren Y."/>
            <person name="Zhao G."/>
            <person name="Gao C."/>
            <person name="Tang Y."/>
            <person name="Liu X."/>
            <person name="Han W."/>
            <person name="Peng X."/>
            <person name="Liu R."/>
            <person name="Wang L."/>
        </authorList>
    </citation>
    <scope>NUCLEOTIDE SEQUENCE [LARGE SCALE GENOMIC DNA]</scope>
    <source>
        <strain>NG80-2</strain>
    </source>
</reference>
<organism>
    <name type="scientific">Geobacillus thermodenitrificans (strain NG80-2)</name>
    <dbReference type="NCBI Taxonomy" id="420246"/>
    <lineage>
        <taxon>Bacteria</taxon>
        <taxon>Bacillati</taxon>
        <taxon>Bacillota</taxon>
        <taxon>Bacilli</taxon>
        <taxon>Bacillales</taxon>
        <taxon>Anoxybacillaceae</taxon>
        <taxon>Geobacillus</taxon>
    </lineage>
</organism>
<comment type="catalytic activity">
    <reaction evidence="1">
        <text>D-mannitol 1-phosphate + NAD(+) = beta-D-fructose 6-phosphate + NADH + H(+)</text>
        <dbReference type="Rhea" id="RHEA:19661"/>
        <dbReference type="ChEBI" id="CHEBI:15378"/>
        <dbReference type="ChEBI" id="CHEBI:57540"/>
        <dbReference type="ChEBI" id="CHEBI:57634"/>
        <dbReference type="ChEBI" id="CHEBI:57945"/>
        <dbReference type="ChEBI" id="CHEBI:61381"/>
        <dbReference type="EC" id="1.1.1.17"/>
    </reaction>
</comment>
<comment type="similarity">
    <text evidence="1">Belongs to the mannitol dehydrogenase family.</text>
</comment>
<accession>A4IPF0</accession>
<evidence type="ECO:0000255" key="1">
    <source>
        <dbReference type="HAMAP-Rule" id="MF_00196"/>
    </source>
</evidence>
<gene>
    <name evidence="1" type="primary">mtlD</name>
    <name type="ordered locus">GTNG_1844</name>
</gene>
<feature type="chain" id="PRO_1000011800" description="Mannitol-1-phosphate 5-dehydrogenase">
    <location>
        <begin position="1"/>
        <end position="385"/>
    </location>
</feature>
<feature type="binding site" evidence="1">
    <location>
        <begin position="3"/>
        <end position="14"/>
    </location>
    <ligand>
        <name>NAD(+)</name>
        <dbReference type="ChEBI" id="CHEBI:57540"/>
    </ligand>
</feature>
<name>MTLD_GEOTN</name>
<sequence>MRAVHFGAGNIGRGFIGSLLAASGYDVVFVDVNEQIVRLLKERGEYRVIIAGERQEEQWVRGVSALNSQTERDDVIEAIASADLVTTAVGPHILPVIAPVIAAGLERRFTVHQKPLHVIACENMIGGTETLKQHVVTHLSEAGRQLVEECVGFLNCAVDRIVPNQTNDDPLAVTVEPFFEWAIETKNTIGAVPPIQGAHFVADLGPYIERKLFTVNTGHALAAYLGYQKQYRTVQEAMKDSGIRESVEQALRESGAVLVKKHGWDEQEHRSYIETTIGRFTNPSLSDDIVRVARSPIRKLGPNDRLVAPAVQYYTLFERVPSGLVKGIAALLLFDETGDAEATALQQTIEQSGVEGALVQYAGLDNSHPLVVAVKEEYKKMQKEQ</sequence>
<protein>
    <recommendedName>
        <fullName evidence="1">Mannitol-1-phosphate 5-dehydrogenase</fullName>
        <ecNumber evidence="1">1.1.1.17</ecNumber>
    </recommendedName>
</protein>
<dbReference type="EC" id="1.1.1.17" evidence="1"/>
<dbReference type="EMBL" id="CP000557">
    <property type="protein sequence ID" value="ABO67204.1"/>
    <property type="molecule type" value="Genomic_DNA"/>
</dbReference>
<dbReference type="RefSeq" id="WP_011887556.1">
    <property type="nucleotide sequence ID" value="NC_009328.1"/>
</dbReference>
<dbReference type="SMR" id="A4IPF0"/>
<dbReference type="KEGG" id="gtn:GTNG_1844"/>
<dbReference type="eggNOG" id="COG0246">
    <property type="taxonomic scope" value="Bacteria"/>
</dbReference>
<dbReference type="HOGENOM" id="CLU_036089_2_0_9"/>
<dbReference type="Proteomes" id="UP000001578">
    <property type="component" value="Chromosome"/>
</dbReference>
<dbReference type="GO" id="GO:0005829">
    <property type="term" value="C:cytosol"/>
    <property type="evidence" value="ECO:0007669"/>
    <property type="project" value="TreeGrafter"/>
</dbReference>
<dbReference type="GO" id="GO:0008926">
    <property type="term" value="F:mannitol-1-phosphate 5-dehydrogenase activity"/>
    <property type="evidence" value="ECO:0007669"/>
    <property type="project" value="UniProtKB-UniRule"/>
</dbReference>
<dbReference type="GO" id="GO:0019592">
    <property type="term" value="P:mannitol catabolic process"/>
    <property type="evidence" value="ECO:0007669"/>
    <property type="project" value="TreeGrafter"/>
</dbReference>
<dbReference type="Gene3D" id="1.10.1040.10">
    <property type="entry name" value="N-(1-d-carboxylethyl)-l-norvaline Dehydrogenase, domain 2"/>
    <property type="match status" value="1"/>
</dbReference>
<dbReference type="Gene3D" id="3.40.50.720">
    <property type="entry name" value="NAD(P)-binding Rossmann-like Domain"/>
    <property type="match status" value="1"/>
</dbReference>
<dbReference type="HAMAP" id="MF_00196">
    <property type="entry name" value="Mannitol_dehydrog"/>
    <property type="match status" value="1"/>
</dbReference>
<dbReference type="InterPro" id="IPR008927">
    <property type="entry name" value="6-PGluconate_DH-like_C_sf"/>
</dbReference>
<dbReference type="InterPro" id="IPR013328">
    <property type="entry name" value="6PGD_dom2"/>
</dbReference>
<dbReference type="InterPro" id="IPR023028">
    <property type="entry name" value="Mannitol_1_phos_5_DH"/>
</dbReference>
<dbReference type="InterPro" id="IPR000669">
    <property type="entry name" value="Mannitol_DH"/>
</dbReference>
<dbReference type="InterPro" id="IPR013118">
    <property type="entry name" value="Mannitol_DH_C"/>
</dbReference>
<dbReference type="InterPro" id="IPR023027">
    <property type="entry name" value="Mannitol_DH_CS"/>
</dbReference>
<dbReference type="InterPro" id="IPR013131">
    <property type="entry name" value="Mannitol_DH_N"/>
</dbReference>
<dbReference type="InterPro" id="IPR036291">
    <property type="entry name" value="NAD(P)-bd_dom_sf"/>
</dbReference>
<dbReference type="NCBIfam" id="NF002646">
    <property type="entry name" value="PRK02318.1-2"/>
    <property type="match status" value="1"/>
</dbReference>
<dbReference type="NCBIfam" id="NF002647">
    <property type="entry name" value="PRK02318.1-3"/>
    <property type="match status" value="1"/>
</dbReference>
<dbReference type="NCBIfam" id="NF002649">
    <property type="entry name" value="PRK02318.2-1"/>
    <property type="match status" value="1"/>
</dbReference>
<dbReference type="NCBIfam" id="NF002652">
    <property type="entry name" value="PRK02318.2-5"/>
    <property type="match status" value="1"/>
</dbReference>
<dbReference type="PANTHER" id="PTHR30524:SF0">
    <property type="entry name" value="ALTRONATE OXIDOREDUCTASE-RELATED"/>
    <property type="match status" value="1"/>
</dbReference>
<dbReference type="PANTHER" id="PTHR30524">
    <property type="entry name" value="MANNITOL-1-PHOSPHATE 5-DEHYDROGENASE"/>
    <property type="match status" value="1"/>
</dbReference>
<dbReference type="Pfam" id="PF01232">
    <property type="entry name" value="Mannitol_dh"/>
    <property type="match status" value="1"/>
</dbReference>
<dbReference type="Pfam" id="PF08125">
    <property type="entry name" value="Mannitol_dh_C"/>
    <property type="match status" value="1"/>
</dbReference>
<dbReference type="PRINTS" id="PR00084">
    <property type="entry name" value="MTLDHDRGNASE"/>
</dbReference>
<dbReference type="SUPFAM" id="SSF48179">
    <property type="entry name" value="6-phosphogluconate dehydrogenase C-terminal domain-like"/>
    <property type="match status" value="1"/>
</dbReference>
<dbReference type="SUPFAM" id="SSF51735">
    <property type="entry name" value="NAD(P)-binding Rossmann-fold domains"/>
    <property type="match status" value="1"/>
</dbReference>
<dbReference type="PROSITE" id="PS00974">
    <property type="entry name" value="MANNITOL_DHGENASE"/>
    <property type="match status" value="1"/>
</dbReference>